<comment type="function">
    <text evidence="1 2">Catalyzes a reversible aldol reaction between acetaldehyde and D-glyceraldehyde 3-phosphate to generate 2-deoxy-D-ribose 5-phosphate.</text>
</comment>
<comment type="catalytic activity">
    <reaction evidence="1 2">
        <text>2-deoxy-D-ribose 5-phosphate = D-glyceraldehyde 3-phosphate + acetaldehyde</text>
        <dbReference type="Rhea" id="RHEA:12821"/>
        <dbReference type="ChEBI" id="CHEBI:15343"/>
        <dbReference type="ChEBI" id="CHEBI:59776"/>
        <dbReference type="ChEBI" id="CHEBI:62877"/>
        <dbReference type="EC" id="4.1.2.4"/>
    </reaction>
</comment>
<comment type="biophysicochemical properties">
    <kinetics>
        <KM evidence="2">0.066 mM for 2-deoxy-D-ribose 5-phosphate</KM>
    </kinetics>
    <phDependence>
        <text evidence="2">Optimum pH is 6.0 for 2-deoxy-D-ribose 5-phosphate cleavage.</text>
    </phDependence>
</comment>
<comment type="pathway">
    <text evidence="1">Carbohydrate degradation; 2-deoxy-D-ribose 1-phosphate degradation; D-glyceraldehyde 3-phosphate and acetaldehyde from 2-deoxy-alpha-D-ribose 1-phosphate: step 2/2.</text>
</comment>
<comment type="subunit">
    <text evidence="2">Homodimer.</text>
</comment>
<comment type="subcellular location">
    <subcellularLocation>
        <location evidence="1">Cytoplasm</location>
    </subcellularLocation>
</comment>
<comment type="similarity">
    <text evidence="1 4">Belongs to the DeoC/FbaB aldolase family. DeoC type 1 subfamily.</text>
</comment>
<keyword id="KW-0002">3D-structure</keyword>
<keyword id="KW-0963">Cytoplasm</keyword>
<keyword id="KW-0456">Lyase</keyword>
<keyword id="KW-1185">Reference proteome</keyword>
<keyword id="KW-0704">Schiff base</keyword>
<protein>
    <recommendedName>
        <fullName evidence="1">Deoxyribose-phosphate aldolase</fullName>
        <shortName evidence="1 3">DERA</shortName>
        <ecNumber evidence="1 2">4.1.2.4</ecNumber>
    </recommendedName>
    <alternativeName>
        <fullName evidence="1 3">2-deoxy-D-ribose 5-phosphate aldolase</fullName>
    </alternativeName>
    <alternativeName>
        <fullName evidence="1">Phosphodeoxyriboaldolase</fullName>
        <shortName evidence="1">Deoxyriboaldolase</shortName>
    </alternativeName>
</protein>
<organism>
    <name type="scientific">Pyrobaculum aerophilum (strain ATCC 51768 / DSM 7523 / JCM 9630 / CIP 104966 / NBRC 100827 / IM2)</name>
    <dbReference type="NCBI Taxonomy" id="178306"/>
    <lineage>
        <taxon>Archaea</taxon>
        <taxon>Thermoproteota</taxon>
        <taxon>Thermoprotei</taxon>
        <taxon>Thermoproteales</taxon>
        <taxon>Thermoproteaceae</taxon>
        <taxon>Pyrobaculum</taxon>
    </lineage>
</organism>
<evidence type="ECO:0000255" key="1">
    <source>
        <dbReference type="HAMAP-Rule" id="MF_00114"/>
    </source>
</evidence>
<evidence type="ECO:0000269" key="2">
    <source>
    </source>
</evidence>
<evidence type="ECO:0000303" key="3">
    <source>
    </source>
</evidence>
<evidence type="ECO:0000305" key="4"/>
<evidence type="ECO:0007744" key="5">
    <source>
        <dbReference type="PDB" id="1VCV"/>
    </source>
</evidence>
<evidence type="ECO:0007829" key="6">
    <source>
        <dbReference type="PDB" id="1VCV"/>
    </source>
</evidence>
<name>DEOC_PYRAE</name>
<feature type="chain" id="PRO_0000057290" description="Deoxyribose-phosphate aldolase">
    <location>
        <begin position="1"/>
        <end position="226"/>
    </location>
</feature>
<feature type="active site" description="Proton donor/acceptor" evidence="1">
    <location>
        <position position="84"/>
    </location>
</feature>
<feature type="active site" description="Schiff-base intermediate with acetaldehyde" evidence="1">
    <location>
        <position position="146"/>
    </location>
</feature>
<feature type="active site" description="Proton donor/acceptor" evidence="1">
    <location>
        <position position="188"/>
    </location>
</feature>
<feature type="helix" evidence="6">
    <location>
        <begin position="2"/>
        <end position="4"/>
    </location>
</feature>
<feature type="strand" evidence="6">
    <location>
        <begin position="5"/>
        <end position="8"/>
    </location>
</feature>
<feature type="helix" evidence="6">
    <location>
        <begin position="16"/>
        <end position="29"/>
    </location>
</feature>
<feature type="strand" evidence="6">
    <location>
        <begin position="32"/>
        <end position="36"/>
    </location>
</feature>
<feature type="helix" evidence="6">
    <location>
        <begin position="38"/>
        <end position="40"/>
    </location>
</feature>
<feature type="helix" evidence="6">
    <location>
        <begin position="41"/>
        <end position="44"/>
    </location>
</feature>
<feature type="helix" evidence="6">
    <location>
        <begin position="45"/>
        <end position="47"/>
    </location>
</feature>
<feature type="strand" evidence="6">
    <location>
        <begin position="49"/>
        <end position="58"/>
    </location>
</feature>
<feature type="turn" evidence="6">
    <location>
        <begin position="59"/>
        <end position="61"/>
    </location>
</feature>
<feature type="helix" evidence="6">
    <location>
        <begin position="66"/>
        <end position="76"/>
    </location>
</feature>
<feature type="turn" evidence="6">
    <location>
        <begin position="77"/>
        <end position="79"/>
    </location>
</feature>
<feature type="strand" evidence="6">
    <location>
        <begin position="81"/>
        <end position="86"/>
    </location>
</feature>
<feature type="helix" evidence="6">
    <location>
        <begin position="89"/>
        <end position="93"/>
    </location>
</feature>
<feature type="helix" evidence="6">
    <location>
        <begin position="97"/>
        <end position="110"/>
    </location>
</feature>
<feature type="turn" evidence="6">
    <location>
        <begin position="111"/>
        <end position="113"/>
    </location>
</feature>
<feature type="strand" evidence="6">
    <location>
        <begin position="114"/>
        <end position="119"/>
    </location>
</feature>
<feature type="helix" evidence="6">
    <location>
        <begin position="122"/>
        <end position="124"/>
    </location>
</feature>
<feature type="helix" evidence="6">
    <location>
        <begin position="127"/>
        <end position="140"/>
    </location>
</feature>
<feature type="strand" evidence="6">
    <location>
        <begin position="143"/>
        <end position="146"/>
    </location>
</feature>
<feature type="helix" evidence="6">
    <location>
        <begin position="154"/>
        <end position="159"/>
    </location>
</feature>
<feature type="helix" evidence="6">
    <location>
        <begin position="168"/>
        <end position="181"/>
    </location>
</feature>
<feature type="strand" evidence="6">
    <location>
        <begin position="186"/>
        <end position="192"/>
    </location>
</feature>
<feature type="helix" evidence="6">
    <location>
        <begin position="196"/>
        <end position="206"/>
    </location>
</feature>
<feature type="turn" evidence="6">
    <location>
        <begin position="212"/>
        <end position="214"/>
    </location>
</feature>
<feature type="strand" evidence="6">
    <location>
        <begin position="215"/>
        <end position="220"/>
    </location>
</feature>
<feature type="helix" evidence="6">
    <location>
        <begin position="222"/>
        <end position="225"/>
    </location>
</feature>
<reference key="1">
    <citation type="journal article" date="2002" name="Proc. Natl. Acad. Sci. U.S.A.">
        <title>Genome sequence of the hyperthermophilic crenarchaeon Pyrobaculum aerophilum.</title>
        <authorList>
            <person name="Fitz-Gibbon S.T."/>
            <person name="Ladner H."/>
            <person name="Kim U.-J."/>
            <person name="Stetter K.O."/>
            <person name="Simon M.I."/>
            <person name="Miller J.H."/>
        </authorList>
    </citation>
    <scope>NUCLEOTIDE SEQUENCE [LARGE SCALE GENOMIC DNA]</scope>
    <source>
        <strain>ATCC 51768 / DSM 7523 / JCM 9630 / CIP 104966 / NBRC 100827 / IM2</strain>
    </source>
</reference>
<reference evidence="5" key="2">
    <citation type="journal article" date="2007" name="Appl. Environ. Microbiol.">
        <title>Sequential aldol condensation catalyzed by hyperthermophilic 2-deoxy-d-ribose-5-phosphate aldolase.</title>
        <authorList>
            <person name="Sakuraba H."/>
            <person name="Yoneda K."/>
            <person name="Yoshihara K."/>
            <person name="Satoh K."/>
            <person name="Kawakami R."/>
            <person name="Uto Y."/>
            <person name="Tsuge H."/>
            <person name="Takahashi K."/>
            <person name="Hori H."/>
            <person name="Ohshima T."/>
        </authorList>
    </citation>
    <scope>X-RAY CRYSTALLOGRAPHY (2.00 ANGSTROMS)</scope>
    <scope>FUNCTION</scope>
    <scope>CATALYTIC ACTIVITY</scope>
    <scope>BIOPHYSICOCHEMICAL PROPERTIES</scope>
    <scope>SUBUNIT</scope>
</reference>
<gene>
    <name evidence="1" type="primary">deoC</name>
    <name type="ordered locus">PAE1231</name>
</gene>
<proteinExistence type="evidence at protein level"/>
<accession>Q8ZXK7</accession>
<dbReference type="EC" id="4.1.2.4" evidence="1 2"/>
<dbReference type="EMBL" id="AE009441">
    <property type="protein sequence ID" value="AAL63340.1"/>
    <property type="molecule type" value="Genomic_DNA"/>
</dbReference>
<dbReference type="RefSeq" id="WP_011007812.1">
    <property type="nucleotide sequence ID" value="NC_003364.1"/>
</dbReference>
<dbReference type="PDB" id="1VCV">
    <property type="method" value="X-ray"/>
    <property type="resolution" value="2.00 A"/>
    <property type="chains" value="A/B=1-226"/>
</dbReference>
<dbReference type="PDBsum" id="1VCV"/>
<dbReference type="SMR" id="Q8ZXK7"/>
<dbReference type="STRING" id="178306.PAE1231"/>
<dbReference type="EnsemblBacteria" id="AAL63340">
    <property type="protein sequence ID" value="AAL63340"/>
    <property type="gene ID" value="PAE1231"/>
</dbReference>
<dbReference type="GeneID" id="1465578"/>
<dbReference type="KEGG" id="pai:PAE1231"/>
<dbReference type="PATRIC" id="fig|178306.9.peg.909"/>
<dbReference type="eggNOG" id="arCOG04320">
    <property type="taxonomic scope" value="Archaea"/>
</dbReference>
<dbReference type="HOGENOM" id="CLU_053595_0_2_2"/>
<dbReference type="InParanoid" id="Q8ZXK7"/>
<dbReference type="UniPathway" id="UPA00002">
    <property type="reaction ID" value="UER00468"/>
</dbReference>
<dbReference type="EvolutionaryTrace" id="Q8ZXK7"/>
<dbReference type="Proteomes" id="UP000002439">
    <property type="component" value="Chromosome"/>
</dbReference>
<dbReference type="GO" id="GO:0005737">
    <property type="term" value="C:cytoplasm"/>
    <property type="evidence" value="ECO:0007669"/>
    <property type="project" value="UniProtKB-SubCell"/>
</dbReference>
<dbReference type="GO" id="GO:0004139">
    <property type="term" value="F:deoxyribose-phosphate aldolase activity"/>
    <property type="evidence" value="ECO:0000318"/>
    <property type="project" value="GO_Central"/>
</dbReference>
<dbReference type="GO" id="GO:0006018">
    <property type="term" value="P:2-deoxyribose 1-phosphate catabolic process"/>
    <property type="evidence" value="ECO:0007669"/>
    <property type="project" value="UniProtKB-UniRule"/>
</dbReference>
<dbReference type="GO" id="GO:0016052">
    <property type="term" value="P:carbohydrate catabolic process"/>
    <property type="evidence" value="ECO:0000318"/>
    <property type="project" value="GO_Central"/>
</dbReference>
<dbReference type="GO" id="GO:0009264">
    <property type="term" value="P:deoxyribonucleotide catabolic process"/>
    <property type="evidence" value="ECO:0000318"/>
    <property type="project" value="GO_Central"/>
</dbReference>
<dbReference type="CDD" id="cd00959">
    <property type="entry name" value="DeoC"/>
    <property type="match status" value="1"/>
</dbReference>
<dbReference type="Gene3D" id="3.20.20.70">
    <property type="entry name" value="Aldolase class I"/>
    <property type="match status" value="1"/>
</dbReference>
<dbReference type="HAMAP" id="MF_00114">
    <property type="entry name" value="DeoC_type1"/>
    <property type="match status" value="1"/>
</dbReference>
<dbReference type="InterPro" id="IPR013785">
    <property type="entry name" value="Aldolase_TIM"/>
</dbReference>
<dbReference type="InterPro" id="IPR011343">
    <property type="entry name" value="DeoC"/>
</dbReference>
<dbReference type="InterPro" id="IPR002915">
    <property type="entry name" value="DeoC/FbaB/LacD_aldolase"/>
</dbReference>
<dbReference type="InterPro" id="IPR028581">
    <property type="entry name" value="DeoC_typeI"/>
</dbReference>
<dbReference type="PANTHER" id="PTHR10889">
    <property type="entry name" value="DEOXYRIBOSE-PHOSPHATE ALDOLASE"/>
    <property type="match status" value="1"/>
</dbReference>
<dbReference type="PANTHER" id="PTHR10889:SF1">
    <property type="entry name" value="DEOXYRIBOSE-PHOSPHATE ALDOLASE"/>
    <property type="match status" value="1"/>
</dbReference>
<dbReference type="PIRSF" id="PIRSF001357">
    <property type="entry name" value="DeoC"/>
    <property type="match status" value="1"/>
</dbReference>
<dbReference type="SMART" id="SM01133">
    <property type="entry name" value="DeoC"/>
    <property type="match status" value="1"/>
</dbReference>
<dbReference type="SUPFAM" id="SSF51569">
    <property type="entry name" value="Aldolase"/>
    <property type="match status" value="1"/>
</dbReference>
<sequence length="226" mass="24539">MIHLVDYALLKPYLTVDEAVAGARKAEELGVAAYCVNPIYAPVVRPLLRKVKLCVVADFPFGALPTASRIALVSRLAEVADEIDVVAPIGLVKSRRWAEVRRDLISVVGAAGGRVVKVITEEPYLRDEERYTLYDIIAEAGAHFIKSSTGFAEEAYAARQGNPVHSTPERAAAIARYIKEKGYRLGVKMAGGIRTREQAKAIVDAIGWGEDPARVRLGTSTPEALL</sequence>